<keyword id="KW-0878">Amphibian defense peptide</keyword>
<keyword id="KW-0903">Direct protein sequencing</keyword>
<keyword id="KW-1015">Disulfide bond</keyword>
<keyword id="KW-0964">Secreted</keyword>
<proteinExistence type="evidence at protein level"/>
<accession>P86124</accession>
<evidence type="ECO:0000269" key="1">
    <source>
    </source>
</evidence>
<evidence type="ECO:0000269" key="2">
    <source>
    </source>
</evidence>
<evidence type="ECO:0000303" key="3">
    <source>
    </source>
</evidence>
<evidence type="ECO:0000305" key="4"/>
<protein>
    <recommendedName>
        <fullName evidence="3">Riparin-1.1</fullName>
    </recommendedName>
</protein>
<name>RIP11_CRIRI</name>
<dbReference type="GO" id="GO:0005576">
    <property type="term" value="C:extracellular region"/>
    <property type="evidence" value="ECO:0000314"/>
    <property type="project" value="UniProtKB"/>
</dbReference>
<dbReference type="GO" id="GO:0006952">
    <property type="term" value="P:defense response"/>
    <property type="evidence" value="ECO:0007669"/>
    <property type="project" value="UniProtKB-KW"/>
</dbReference>
<dbReference type="GO" id="GO:0070665">
    <property type="term" value="P:positive regulation of leukocyte proliferation"/>
    <property type="evidence" value="ECO:0000314"/>
    <property type="project" value="UniProtKB"/>
</dbReference>
<feature type="peptide" id="PRO_0000371725" description="Riparin-1.1" evidence="1">
    <location>
        <begin position="1"/>
        <end position="10"/>
    </location>
</feature>
<feature type="disulfide bond" evidence="1 2">
    <location>
        <begin position="3"/>
        <end position="10"/>
    </location>
</feature>
<comment type="function">
    <text evidence="2">Induces mouse splenocyte proliferation through binding to CCK-BR.</text>
</comment>
<comment type="subcellular location">
    <subcellularLocation>
        <location evidence="1">Secreted</location>
    </subcellularLocation>
</comment>
<comment type="tissue specificity">
    <text evidence="1">Expressed by the skin glands.</text>
</comment>
<sequence length="10" mass="1161">RLCIPVIFPC</sequence>
<reference evidence="4" key="1">
    <citation type="journal article" date="2006" name="Rapid Commun. Mass Spectrom.">
        <title>Host-defence skin peptides of the Australian streambank froglet Crinia riparia: isolation and sequence determination by positive and negative ion electrospray mass spectrometry.</title>
        <authorList>
            <person name="Maselli V.M."/>
            <person name="Bilusich D."/>
            <person name="Bowie J.H."/>
            <person name="Tyler M.J."/>
        </authorList>
    </citation>
    <scope>PROTEIN SEQUENCE</scope>
    <scope>SUBCELLULAR LOCATION</scope>
    <scope>TISSUE SPECIFICITY</scope>
    <scope>DISULFIDE BOND</scope>
    <source>
        <tissue evidence="1">Skin secretion</tissue>
    </source>
</reference>
<reference evidence="4" key="2">
    <citation type="journal article" date="2008" name="Regul. Pept.">
        <title>Disulfide-containing peptides from the glandular skin secretions of froglets of the genus Crinia: structure, activity and evolutionary trends.</title>
        <authorList>
            <person name="Jackway R.J."/>
            <person name="Pukala T.L."/>
            <person name="Maselli V.M."/>
            <person name="Musgrave I.F."/>
            <person name="Bowie J.H."/>
            <person name="Liu Y."/>
            <person name="Surinya-Johnson K.H."/>
            <person name="Donnellan S.C."/>
            <person name="Doyle J.R."/>
            <person name="Llewellyn L.E."/>
            <person name="Tyler M.J."/>
        </authorList>
    </citation>
    <scope>FUNCTION</scope>
    <scope>STRUCTURE BY NMR OF 1-10</scope>
    <scope>DISULFIDE BOND</scope>
    <scope>DISCUSSION OF SEQUENCE</scope>
</reference>
<organism>
    <name type="scientific">Crinia riparia</name>
    <name type="common">Streambank froglet</name>
    <name type="synonym">Flinders Ranges froglet</name>
    <dbReference type="NCBI Taxonomy" id="446489"/>
    <lineage>
        <taxon>Eukaryota</taxon>
        <taxon>Metazoa</taxon>
        <taxon>Chordata</taxon>
        <taxon>Craniata</taxon>
        <taxon>Vertebrata</taxon>
        <taxon>Euteleostomi</taxon>
        <taxon>Amphibia</taxon>
        <taxon>Batrachia</taxon>
        <taxon>Anura</taxon>
        <taxon>Neobatrachia</taxon>
        <taxon>Myobatrachoidea</taxon>
        <taxon>Myobatrachidae</taxon>
        <taxon>Myobatrachinae</taxon>
        <taxon>Crinia</taxon>
    </lineage>
</organism>